<keyword id="KW-0456">Lyase</keyword>
<name>CAID_SALPB</name>
<sequence length="261" mass="28092">MSESLHLTRNGPILEITLDRPKANAIDAKTSFAMGEAFLNFRDDPELRVAIITGGGEKFFSAGWDLKAAAEGEAPDADFGPGGFAGLTEIFDLDKPVIAAVNGYAFGGGFELALAADFIVCAENASFALPEAKLGIVPDSGGVLRLPKLLPPAIVNEMVMTGRRMSAEEALRWGVVNRVVSQSELMDSARELAQQLVNSAPLAIAALKEIYRATSEMPVEEGYRYIRSGVLKHYPSVLHSEDALEGPQAFAEKRDPVWKGR</sequence>
<evidence type="ECO:0000255" key="1">
    <source>
        <dbReference type="HAMAP-Rule" id="MF_01051"/>
    </source>
</evidence>
<feature type="chain" id="PRO_1000084427" description="Carnitinyl-CoA dehydratase">
    <location>
        <begin position="1"/>
        <end position="261"/>
    </location>
</feature>
<feature type="active site" description="Nucleophile" evidence="1">
    <location>
        <position position="111"/>
    </location>
</feature>
<feature type="active site" description="Proton acceptor" evidence="1">
    <location>
        <position position="131"/>
    </location>
</feature>
<dbReference type="EC" id="4.2.1.149" evidence="1"/>
<dbReference type="EMBL" id="CP000886">
    <property type="protein sequence ID" value="ABX65529.1"/>
    <property type="molecule type" value="Genomic_DNA"/>
</dbReference>
<dbReference type="RefSeq" id="WP_000004383.1">
    <property type="nucleotide sequence ID" value="NC_010102.1"/>
</dbReference>
<dbReference type="SMR" id="A9MYJ5"/>
<dbReference type="KEGG" id="spq:SPAB_00086"/>
<dbReference type="PATRIC" id="fig|1016998.12.peg.83"/>
<dbReference type="HOGENOM" id="CLU_009834_7_6_6"/>
<dbReference type="BioCyc" id="SENT1016998:SPAB_RS00345-MONOMER"/>
<dbReference type="UniPathway" id="UPA00117"/>
<dbReference type="Proteomes" id="UP000008556">
    <property type="component" value="Chromosome"/>
</dbReference>
<dbReference type="GO" id="GO:0016836">
    <property type="term" value="F:hydro-lyase activity"/>
    <property type="evidence" value="ECO:0007669"/>
    <property type="project" value="UniProtKB-UniRule"/>
</dbReference>
<dbReference type="GO" id="GO:0008735">
    <property type="term" value="F:L-carnitine CoA-transferase activity"/>
    <property type="evidence" value="ECO:0007669"/>
    <property type="project" value="RHEA"/>
</dbReference>
<dbReference type="GO" id="GO:0009437">
    <property type="term" value="P:carnitine metabolic process"/>
    <property type="evidence" value="ECO:0007669"/>
    <property type="project" value="UniProtKB-UniRule"/>
</dbReference>
<dbReference type="GO" id="GO:0006635">
    <property type="term" value="P:fatty acid beta-oxidation"/>
    <property type="evidence" value="ECO:0007669"/>
    <property type="project" value="TreeGrafter"/>
</dbReference>
<dbReference type="CDD" id="cd06558">
    <property type="entry name" value="crotonase-like"/>
    <property type="match status" value="1"/>
</dbReference>
<dbReference type="FunFam" id="1.10.12.10:FF:000005">
    <property type="entry name" value="Carnitinyl-CoA dehydratase"/>
    <property type="match status" value="1"/>
</dbReference>
<dbReference type="FunFam" id="3.90.226.10:FF:000009">
    <property type="entry name" value="Carnitinyl-CoA dehydratase"/>
    <property type="match status" value="1"/>
</dbReference>
<dbReference type="Gene3D" id="3.90.226.10">
    <property type="entry name" value="2-enoyl-CoA Hydratase, Chain A, domain 1"/>
    <property type="match status" value="1"/>
</dbReference>
<dbReference type="Gene3D" id="1.10.12.10">
    <property type="entry name" value="Lyase 2-enoyl-coa Hydratase, Chain A, domain 2"/>
    <property type="match status" value="1"/>
</dbReference>
<dbReference type="HAMAP" id="MF_01051">
    <property type="entry name" value="CaiD"/>
    <property type="match status" value="1"/>
</dbReference>
<dbReference type="InterPro" id="IPR022852">
    <property type="entry name" value="Carnitinyl_CoA_dehydratase"/>
</dbReference>
<dbReference type="InterPro" id="IPR029045">
    <property type="entry name" value="ClpP/crotonase-like_dom_sf"/>
</dbReference>
<dbReference type="InterPro" id="IPR018376">
    <property type="entry name" value="Enoyl-CoA_hyd/isom_CS"/>
</dbReference>
<dbReference type="InterPro" id="IPR001753">
    <property type="entry name" value="Enoyl-CoA_hydra/iso"/>
</dbReference>
<dbReference type="InterPro" id="IPR014748">
    <property type="entry name" value="Enoyl-CoA_hydra_C"/>
</dbReference>
<dbReference type="NCBIfam" id="NF002936">
    <property type="entry name" value="PRK03580.1"/>
    <property type="match status" value="1"/>
</dbReference>
<dbReference type="PANTHER" id="PTHR11941:SF54">
    <property type="entry name" value="ENOYL-COA HYDRATASE, MITOCHONDRIAL"/>
    <property type="match status" value="1"/>
</dbReference>
<dbReference type="PANTHER" id="PTHR11941">
    <property type="entry name" value="ENOYL-COA HYDRATASE-RELATED"/>
    <property type="match status" value="1"/>
</dbReference>
<dbReference type="Pfam" id="PF00378">
    <property type="entry name" value="ECH_1"/>
    <property type="match status" value="1"/>
</dbReference>
<dbReference type="SUPFAM" id="SSF52096">
    <property type="entry name" value="ClpP/crotonase"/>
    <property type="match status" value="1"/>
</dbReference>
<dbReference type="PROSITE" id="PS00166">
    <property type="entry name" value="ENOYL_COA_HYDRATASE"/>
    <property type="match status" value="1"/>
</dbReference>
<accession>A9MYJ5</accession>
<protein>
    <recommendedName>
        <fullName evidence="1">Carnitinyl-CoA dehydratase</fullName>
        <ecNumber evidence="1">4.2.1.149</ecNumber>
    </recommendedName>
    <alternativeName>
        <fullName evidence="1">Crotonobetainyl-CoA hydratase</fullName>
    </alternativeName>
</protein>
<comment type="function">
    <text evidence="1">Catalyzes the reversible dehydration of L-carnitinyl-CoA to crotonobetainyl-CoA.</text>
</comment>
<comment type="catalytic activity">
    <reaction evidence="1">
        <text>(R)-carnitinyl-CoA = crotonobetainyl-CoA + H2O</text>
        <dbReference type="Rhea" id="RHEA:28338"/>
        <dbReference type="ChEBI" id="CHEBI:15377"/>
        <dbReference type="ChEBI" id="CHEBI:60932"/>
        <dbReference type="ChEBI" id="CHEBI:60933"/>
        <dbReference type="EC" id="4.2.1.149"/>
    </reaction>
</comment>
<comment type="pathway">
    <text evidence="1">Amine and polyamine metabolism; carnitine metabolism.</text>
</comment>
<comment type="similarity">
    <text evidence="1">Belongs to the enoyl-CoA hydratase/isomerase family.</text>
</comment>
<organism>
    <name type="scientific">Salmonella paratyphi B (strain ATCC BAA-1250 / SPB7)</name>
    <dbReference type="NCBI Taxonomy" id="1016998"/>
    <lineage>
        <taxon>Bacteria</taxon>
        <taxon>Pseudomonadati</taxon>
        <taxon>Pseudomonadota</taxon>
        <taxon>Gammaproteobacteria</taxon>
        <taxon>Enterobacterales</taxon>
        <taxon>Enterobacteriaceae</taxon>
        <taxon>Salmonella</taxon>
    </lineage>
</organism>
<proteinExistence type="inferred from homology"/>
<reference key="1">
    <citation type="submission" date="2007-11" db="EMBL/GenBank/DDBJ databases">
        <authorList>
            <consortium name="The Salmonella enterica serovar Paratyphi B Genome Sequencing Project"/>
            <person name="McClelland M."/>
            <person name="Sanderson E.K."/>
            <person name="Porwollik S."/>
            <person name="Spieth J."/>
            <person name="Clifton W.S."/>
            <person name="Fulton R."/>
            <person name="Cordes M."/>
            <person name="Wollam A."/>
            <person name="Shah N."/>
            <person name="Pepin K."/>
            <person name="Bhonagiri V."/>
            <person name="Nash W."/>
            <person name="Johnson M."/>
            <person name="Thiruvilangam P."/>
            <person name="Wilson R."/>
        </authorList>
    </citation>
    <scope>NUCLEOTIDE SEQUENCE [LARGE SCALE GENOMIC DNA]</scope>
    <source>
        <strain>ATCC BAA-1250 / SPB7</strain>
    </source>
</reference>
<gene>
    <name evidence="1" type="primary">caiD</name>
    <name type="ordered locus">SPAB_00086</name>
</gene>